<organism>
    <name type="scientific">Mus musculus</name>
    <name type="common">Mouse</name>
    <dbReference type="NCBI Taxonomy" id="10090"/>
    <lineage>
        <taxon>Eukaryota</taxon>
        <taxon>Metazoa</taxon>
        <taxon>Chordata</taxon>
        <taxon>Craniata</taxon>
        <taxon>Vertebrata</taxon>
        <taxon>Euteleostomi</taxon>
        <taxon>Mammalia</taxon>
        <taxon>Eutheria</taxon>
        <taxon>Euarchontoglires</taxon>
        <taxon>Glires</taxon>
        <taxon>Rodentia</taxon>
        <taxon>Myomorpha</taxon>
        <taxon>Muroidea</taxon>
        <taxon>Muridae</taxon>
        <taxon>Murinae</taxon>
        <taxon>Mus</taxon>
        <taxon>Mus</taxon>
    </lineage>
</organism>
<sequence length="352" mass="38348">MKLSCTLTQWALYVCPAVLLATQMLLAASSETLKCEGLVSTEQGSCQAAAEEDEGDEDDGDMTQSSEAGFQFKGYTFSKPFHLSVSYDWLILQGPATLIFEGDTLVLHCRAWQDWPLTQVIFYREGSALGPPGPKSEFSITMVQKSDGGHYHCSGIFRSPGPGSREAASPVAITVQELFAAPVLKALPSSEPQEGGSVTLSCQTKLALQRSASRLLFSFYKDGRSLSVRGVSSELKIPKASEEHSGSYWCEAVTEDRQISKQSPQLEIWVQALQKPTASETPPTEALGPLPPPPASSAEQPRFSSPDPHLHHQMQLLLKQIQDVRALLGHLVMELRDLSVYLKPGTTKVADK</sequence>
<accession>Q920A9</accession>
<accession>Q3T9Q2</accession>
<accession>Q8K3U9</accession>
<accession>Q8VHP5</accession>
<gene>
    <name type="primary">Fcrla</name>
    <name type="synonym">Fcrl</name>
    <name type="synonym">Fcrl1</name>
    <name type="synonym">Fcrlm1</name>
    <name type="synonym">Fcrx</name>
    <name type="synonym">Freb</name>
</gene>
<name>FCRLA_MOUSE</name>
<comment type="function">
    <text>May be implicated in B-cell differentiation and lymphomagenesis.</text>
</comment>
<comment type="subunit">
    <text evidence="1">Monomer or homodimer; disulfide-linked.</text>
</comment>
<comment type="interaction">
    <interactant intactId="EBI-646587">
        <id>Q920A9</id>
    </interactant>
    <interactant intactId="EBI-520016">
        <id>P39429</id>
        <label>Traf2</label>
    </interactant>
    <organismsDiffer>false</organismsDiffer>
    <experiments>5</experiments>
</comment>
<comment type="subcellular location">
    <subcellularLocation>
        <location evidence="2">Cytoplasm</location>
    </subcellularLocation>
    <text evidence="2">Seems not to be secreted.</text>
</comment>
<comment type="alternative products">
    <event type="alternative splicing"/>
    <isoform>
        <id>Q920A9-1</id>
        <name>1</name>
        <sequence type="displayed"/>
    </isoform>
    <isoform>
        <id>Q920A9-2</id>
        <name>2</name>
        <sequence type="described" ref="VSP_017610"/>
    </isoform>
</comment>
<comment type="tissue specificity">
    <text evidence="5">Highly expressed in spleen. Expressed in immature B-cell and B-cell lines.</text>
</comment>
<keyword id="KW-0025">Alternative splicing</keyword>
<keyword id="KW-0963">Cytoplasm</keyword>
<keyword id="KW-0221">Differentiation</keyword>
<keyword id="KW-1015">Disulfide bond</keyword>
<keyword id="KW-0393">Immunoglobulin domain</keyword>
<keyword id="KW-1185">Reference proteome</keyword>
<keyword id="KW-0677">Repeat</keyword>
<keyword id="KW-0732">Signal</keyword>
<feature type="signal peptide" evidence="1">
    <location>
        <begin position="1"/>
        <end position="30"/>
    </location>
</feature>
<feature type="chain" id="PRO_0000227936" description="Fc receptor-like A">
    <location>
        <begin position="31"/>
        <end position="352"/>
    </location>
</feature>
<feature type="domain" description="Ig-like C2-type 1">
    <location>
        <begin position="80"/>
        <end position="169"/>
    </location>
</feature>
<feature type="domain" description="Ig-like C2-type 2">
    <location>
        <begin position="182"/>
        <end position="260"/>
    </location>
</feature>
<feature type="region of interest" description="Disordered" evidence="4">
    <location>
        <begin position="46"/>
        <end position="65"/>
    </location>
</feature>
<feature type="region of interest" description="Disordered" evidence="4">
    <location>
        <begin position="275"/>
        <end position="310"/>
    </location>
</feature>
<feature type="compositionally biased region" description="Acidic residues" evidence="4">
    <location>
        <begin position="50"/>
        <end position="61"/>
    </location>
</feature>
<feature type="disulfide bond" evidence="3">
    <location>
        <begin position="109"/>
        <end position="153"/>
    </location>
</feature>
<feature type="disulfide bond" evidence="3">
    <location>
        <begin position="202"/>
        <end position="250"/>
    </location>
</feature>
<feature type="splice variant" id="VSP_017610" description="In isoform 2." evidence="6 7 8 9">
    <original>A</original>
    <variation>AA</variation>
    <location>
        <position position="27"/>
    </location>
</feature>
<feature type="sequence conflict" description="In Ref. 4; BAE42968." evidence="10" ref="4">
    <location>
        <position position="19"/>
    </location>
</feature>
<feature type="sequence conflict" description="In Ref. 4; BAE42968." evidence="10" ref="4">
    <original>T</original>
    <variation>I</variation>
    <location>
        <position position="22"/>
    </location>
</feature>
<feature type="sequence conflict" description="In Ref. 4; BAE42968." evidence="10" ref="4">
    <original>S</original>
    <variation>L</variation>
    <location>
        <position position="30"/>
    </location>
</feature>
<feature type="sequence conflict" description="In Ref. 4; BAE42968." evidence="10" ref="4">
    <original>G</original>
    <variation>D</variation>
    <location>
        <position position="69"/>
    </location>
</feature>
<feature type="sequence conflict" description="In Ref. 4; BAE42968." evidence="10" ref="4">
    <original>H</original>
    <variation>Y</variation>
    <location>
        <position position="108"/>
    </location>
</feature>
<feature type="sequence conflict" description="In Ref. 2; AAL58112." evidence="10" ref="2">
    <original>PPP</original>
    <variation>LPA</variation>
    <location>
        <begin position="291"/>
        <end position="293"/>
    </location>
</feature>
<feature type="sequence conflict" description="In Ref. 4; BAE42968." evidence="10" ref="4">
    <original>I</original>
    <variation>M</variation>
    <location>
        <position position="321"/>
    </location>
</feature>
<protein>
    <recommendedName>
        <fullName>Fc receptor-like A</fullName>
    </recommendedName>
    <alternativeName>
        <fullName>Fc receptor homolog expressed in B-cells</fullName>
    </alternativeName>
    <alternativeName>
        <fullName>Fc receptor-like and mucin-like protein 1</fullName>
    </alternativeName>
    <alternativeName>
        <fullName>Fc receptor-like protein</fullName>
    </alternativeName>
    <alternativeName>
        <fullName>Fc receptor-related protein X</fullName>
        <shortName>FcRX</shortName>
    </alternativeName>
</protein>
<reference key="1">
    <citation type="journal article" date="2002" name="Eur. J. Immunol.">
        <title>FCRL, a novel member of the leukocyte Fc receptor family possesses unique structural features.</title>
        <authorList>
            <person name="Mechetina L.V."/>
            <person name="Najakshin A.M."/>
            <person name="Volkova O.Y."/>
            <person name="Guselnikov S.V."/>
            <person name="Faizulin R.Z."/>
            <person name="Alabyev B.Y."/>
            <person name="Chikaev N.A."/>
            <person name="Vinogradova M.S."/>
            <person name="Taranin A.V."/>
        </authorList>
    </citation>
    <scope>NUCLEOTIDE SEQUENCE [MRNA] (ISOFORM 1)</scope>
    <source>
        <strain>C57BL/6J</strain>
        <tissue>Spleen</tissue>
    </source>
</reference>
<reference key="2">
    <citation type="journal article" date="2002" name="Proc. Natl. Acad. Sci. U.S.A.">
        <title>An unusual Fc receptor-related protein expressed in human centroblasts.</title>
        <authorList>
            <person name="Facchetti F."/>
            <person name="Cella M."/>
            <person name="Festa S."/>
            <person name="Fremont D.H."/>
            <person name="Colonna M."/>
        </authorList>
    </citation>
    <scope>NUCLEOTIDE SEQUENCE [MRNA] (ISOFORM 2)</scope>
</reference>
<reference key="3">
    <citation type="journal article" date="2002" name="Int. Immunol.">
        <title>Definition of an Fc receptor-related gene (FcRX) expressed in human and mouse B cells.</title>
        <authorList>
            <person name="Davis R.S."/>
            <person name="Li H."/>
            <person name="Chen C.-C."/>
            <person name="Wang Y.-H."/>
            <person name="Cooper M.D."/>
            <person name="Burrows P.D."/>
        </authorList>
    </citation>
    <scope>NUCLEOTIDE SEQUENCE [MRNA] (ISOFORM 2)</scope>
    <scope>TISSUE SPECIFICITY</scope>
    <source>
        <strain>BALB/cJ</strain>
    </source>
</reference>
<reference key="4">
    <citation type="journal article" date="2005" name="Science">
        <title>The transcriptional landscape of the mammalian genome.</title>
        <authorList>
            <person name="Carninci P."/>
            <person name="Kasukawa T."/>
            <person name="Katayama S."/>
            <person name="Gough J."/>
            <person name="Frith M.C."/>
            <person name="Maeda N."/>
            <person name="Oyama R."/>
            <person name="Ravasi T."/>
            <person name="Lenhard B."/>
            <person name="Wells C."/>
            <person name="Kodzius R."/>
            <person name="Shimokawa K."/>
            <person name="Bajic V.B."/>
            <person name="Brenner S.E."/>
            <person name="Batalov S."/>
            <person name="Forrest A.R."/>
            <person name="Zavolan M."/>
            <person name="Davis M.J."/>
            <person name="Wilming L.G."/>
            <person name="Aidinis V."/>
            <person name="Allen J.E."/>
            <person name="Ambesi-Impiombato A."/>
            <person name="Apweiler R."/>
            <person name="Aturaliya R.N."/>
            <person name="Bailey T.L."/>
            <person name="Bansal M."/>
            <person name="Baxter L."/>
            <person name="Beisel K.W."/>
            <person name="Bersano T."/>
            <person name="Bono H."/>
            <person name="Chalk A.M."/>
            <person name="Chiu K.P."/>
            <person name="Choudhary V."/>
            <person name="Christoffels A."/>
            <person name="Clutterbuck D.R."/>
            <person name="Crowe M.L."/>
            <person name="Dalla E."/>
            <person name="Dalrymple B.P."/>
            <person name="de Bono B."/>
            <person name="Della Gatta G."/>
            <person name="di Bernardo D."/>
            <person name="Down T."/>
            <person name="Engstrom P."/>
            <person name="Fagiolini M."/>
            <person name="Faulkner G."/>
            <person name="Fletcher C.F."/>
            <person name="Fukushima T."/>
            <person name="Furuno M."/>
            <person name="Futaki S."/>
            <person name="Gariboldi M."/>
            <person name="Georgii-Hemming P."/>
            <person name="Gingeras T.R."/>
            <person name="Gojobori T."/>
            <person name="Green R.E."/>
            <person name="Gustincich S."/>
            <person name="Harbers M."/>
            <person name="Hayashi Y."/>
            <person name="Hensch T.K."/>
            <person name="Hirokawa N."/>
            <person name="Hill D."/>
            <person name="Huminiecki L."/>
            <person name="Iacono M."/>
            <person name="Ikeo K."/>
            <person name="Iwama A."/>
            <person name="Ishikawa T."/>
            <person name="Jakt M."/>
            <person name="Kanapin A."/>
            <person name="Katoh M."/>
            <person name="Kawasawa Y."/>
            <person name="Kelso J."/>
            <person name="Kitamura H."/>
            <person name="Kitano H."/>
            <person name="Kollias G."/>
            <person name="Krishnan S.P."/>
            <person name="Kruger A."/>
            <person name="Kummerfeld S.K."/>
            <person name="Kurochkin I.V."/>
            <person name="Lareau L.F."/>
            <person name="Lazarevic D."/>
            <person name="Lipovich L."/>
            <person name="Liu J."/>
            <person name="Liuni S."/>
            <person name="McWilliam S."/>
            <person name="Madan Babu M."/>
            <person name="Madera M."/>
            <person name="Marchionni L."/>
            <person name="Matsuda H."/>
            <person name="Matsuzawa S."/>
            <person name="Miki H."/>
            <person name="Mignone F."/>
            <person name="Miyake S."/>
            <person name="Morris K."/>
            <person name="Mottagui-Tabar S."/>
            <person name="Mulder N."/>
            <person name="Nakano N."/>
            <person name="Nakauchi H."/>
            <person name="Ng P."/>
            <person name="Nilsson R."/>
            <person name="Nishiguchi S."/>
            <person name="Nishikawa S."/>
            <person name="Nori F."/>
            <person name="Ohara O."/>
            <person name="Okazaki Y."/>
            <person name="Orlando V."/>
            <person name="Pang K.C."/>
            <person name="Pavan W.J."/>
            <person name="Pavesi G."/>
            <person name="Pesole G."/>
            <person name="Petrovsky N."/>
            <person name="Piazza S."/>
            <person name="Reed J."/>
            <person name="Reid J.F."/>
            <person name="Ring B.Z."/>
            <person name="Ringwald M."/>
            <person name="Rost B."/>
            <person name="Ruan Y."/>
            <person name="Salzberg S.L."/>
            <person name="Sandelin A."/>
            <person name="Schneider C."/>
            <person name="Schoenbach C."/>
            <person name="Sekiguchi K."/>
            <person name="Semple C.A."/>
            <person name="Seno S."/>
            <person name="Sessa L."/>
            <person name="Sheng Y."/>
            <person name="Shibata Y."/>
            <person name="Shimada H."/>
            <person name="Shimada K."/>
            <person name="Silva D."/>
            <person name="Sinclair B."/>
            <person name="Sperling S."/>
            <person name="Stupka E."/>
            <person name="Sugiura K."/>
            <person name="Sultana R."/>
            <person name="Takenaka Y."/>
            <person name="Taki K."/>
            <person name="Tammoja K."/>
            <person name="Tan S.L."/>
            <person name="Tang S."/>
            <person name="Taylor M.S."/>
            <person name="Tegner J."/>
            <person name="Teichmann S.A."/>
            <person name="Ueda H.R."/>
            <person name="van Nimwegen E."/>
            <person name="Verardo R."/>
            <person name="Wei C.L."/>
            <person name="Yagi K."/>
            <person name="Yamanishi H."/>
            <person name="Zabarovsky E."/>
            <person name="Zhu S."/>
            <person name="Zimmer A."/>
            <person name="Hide W."/>
            <person name="Bult C."/>
            <person name="Grimmond S.M."/>
            <person name="Teasdale R.D."/>
            <person name="Liu E.T."/>
            <person name="Brusic V."/>
            <person name="Quackenbush J."/>
            <person name="Wahlestedt C."/>
            <person name="Mattick J.S."/>
            <person name="Hume D.A."/>
            <person name="Kai C."/>
            <person name="Sasaki D."/>
            <person name="Tomaru Y."/>
            <person name="Fukuda S."/>
            <person name="Kanamori-Katayama M."/>
            <person name="Suzuki M."/>
            <person name="Aoki J."/>
            <person name="Arakawa T."/>
            <person name="Iida J."/>
            <person name="Imamura K."/>
            <person name="Itoh M."/>
            <person name="Kato T."/>
            <person name="Kawaji H."/>
            <person name="Kawagashira N."/>
            <person name="Kawashima T."/>
            <person name="Kojima M."/>
            <person name="Kondo S."/>
            <person name="Konno H."/>
            <person name="Nakano K."/>
            <person name="Ninomiya N."/>
            <person name="Nishio T."/>
            <person name="Okada M."/>
            <person name="Plessy C."/>
            <person name="Shibata K."/>
            <person name="Shiraki T."/>
            <person name="Suzuki S."/>
            <person name="Tagami M."/>
            <person name="Waki K."/>
            <person name="Watahiki A."/>
            <person name="Okamura-Oho Y."/>
            <person name="Suzuki H."/>
            <person name="Kawai J."/>
            <person name="Hayashizaki Y."/>
        </authorList>
    </citation>
    <scope>NUCLEOTIDE SEQUENCE [LARGE SCALE MRNA] (ISOFORM 2)</scope>
    <source>
        <strain>NOD</strain>
        <tissue>Spleen</tissue>
    </source>
</reference>
<reference key="5">
    <citation type="journal article" date="2004" name="Genome Res.">
        <title>The status, quality, and expansion of the NIH full-length cDNA project: the Mammalian Gene Collection (MGC).</title>
        <authorList>
            <consortium name="The MGC Project Team"/>
        </authorList>
    </citation>
    <scope>NUCLEOTIDE SEQUENCE [LARGE SCALE MRNA] (ISOFORM 2)</scope>
    <source>
        <tissue>Heart</tissue>
        <tissue>Lung</tissue>
    </source>
</reference>
<reference key="6">
    <citation type="journal article" date="2010" name="Cell">
        <title>A tissue-specific atlas of mouse protein phosphorylation and expression.</title>
        <authorList>
            <person name="Huttlin E.L."/>
            <person name="Jedrychowski M.P."/>
            <person name="Elias J.E."/>
            <person name="Goswami T."/>
            <person name="Rad R."/>
            <person name="Beausoleil S.A."/>
            <person name="Villen J."/>
            <person name="Haas W."/>
            <person name="Sowa M.E."/>
            <person name="Gygi S.P."/>
        </authorList>
    </citation>
    <scope>IDENTIFICATION BY MASS SPECTROMETRY [LARGE SCALE ANALYSIS]</scope>
    <source>
        <tissue>Spleen</tissue>
    </source>
</reference>
<proteinExistence type="evidence at protein level"/>
<evidence type="ECO:0000250" key="1"/>
<evidence type="ECO:0000250" key="2">
    <source>
        <dbReference type="UniProtKB" id="Q7L513"/>
    </source>
</evidence>
<evidence type="ECO:0000255" key="3">
    <source>
        <dbReference type="PROSITE-ProRule" id="PRU00114"/>
    </source>
</evidence>
<evidence type="ECO:0000256" key="4">
    <source>
        <dbReference type="SAM" id="MobiDB-lite"/>
    </source>
</evidence>
<evidence type="ECO:0000269" key="5">
    <source>
    </source>
</evidence>
<evidence type="ECO:0000303" key="6">
    <source>
    </source>
</evidence>
<evidence type="ECO:0000303" key="7">
    <source>
    </source>
</evidence>
<evidence type="ECO:0000303" key="8">
    <source>
    </source>
</evidence>
<evidence type="ECO:0000303" key="9">
    <source>
    </source>
</evidence>
<evidence type="ECO:0000305" key="10"/>
<dbReference type="EMBL" id="AF329487">
    <property type="protein sequence ID" value="AAL23897.1"/>
    <property type="molecule type" value="mRNA"/>
</dbReference>
<dbReference type="EMBL" id="AF426462">
    <property type="protein sequence ID" value="AAL58112.1"/>
    <property type="molecule type" value="mRNA"/>
</dbReference>
<dbReference type="EMBL" id="AF531424">
    <property type="protein sequence ID" value="AAM97592.1"/>
    <property type="molecule type" value="mRNA"/>
</dbReference>
<dbReference type="EMBL" id="AK041572">
    <property type="protein sequence ID" value="BAC30990.1"/>
    <property type="molecule type" value="mRNA"/>
</dbReference>
<dbReference type="EMBL" id="AK172370">
    <property type="protein sequence ID" value="BAE42968.1"/>
    <property type="molecule type" value="mRNA"/>
</dbReference>
<dbReference type="EMBL" id="BC064708">
    <property type="protein sequence ID" value="AAH64708.1"/>
    <property type="molecule type" value="mRNA"/>
</dbReference>
<dbReference type="CCDS" id="CCDS48439.1">
    <molecule id="Q920A9-1"/>
</dbReference>
<dbReference type="CCDS" id="CCDS48440.1">
    <molecule id="Q920A9-2"/>
</dbReference>
<dbReference type="RefSeq" id="NP_001153687.1">
    <molecule id="Q920A9-2"/>
    <property type="nucleotide sequence ID" value="NM_001160215.1"/>
</dbReference>
<dbReference type="RefSeq" id="NP_660123.1">
    <molecule id="Q920A9-1"/>
    <property type="nucleotide sequence ID" value="NM_145141.2"/>
</dbReference>
<dbReference type="SMR" id="Q920A9"/>
<dbReference type="BioGRID" id="221124">
    <property type="interactions" value="1"/>
</dbReference>
<dbReference type="FunCoup" id="Q920A9">
    <property type="interactions" value="259"/>
</dbReference>
<dbReference type="IntAct" id="Q920A9">
    <property type="interactions" value="1"/>
</dbReference>
<dbReference type="STRING" id="10090.ENSMUSP00000036380"/>
<dbReference type="iPTMnet" id="Q920A9"/>
<dbReference type="PhosphoSitePlus" id="Q920A9"/>
<dbReference type="PaxDb" id="10090-ENSMUSP00000036380"/>
<dbReference type="ProteomicsDB" id="271687">
    <molecule id="Q920A9-1"/>
</dbReference>
<dbReference type="ProteomicsDB" id="271688">
    <molecule id="Q920A9-2"/>
</dbReference>
<dbReference type="Antibodypedia" id="34314">
    <property type="antibodies" value="108 antibodies from 21 providers"/>
</dbReference>
<dbReference type="DNASU" id="98752"/>
<dbReference type="Ensembl" id="ENSMUST00000046322.14">
    <molecule id="Q920A9-2"/>
    <property type="protein sequence ID" value="ENSMUSP00000036380.8"/>
    <property type="gene ID" value="ENSMUSG00000038421.14"/>
</dbReference>
<dbReference type="Ensembl" id="ENSMUST00000159171.2">
    <molecule id="Q920A9-1"/>
    <property type="protein sequence ID" value="ENSMUSP00000124853.2"/>
    <property type="gene ID" value="ENSMUSG00000038421.14"/>
</dbReference>
<dbReference type="GeneID" id="98752"/>
<dbReference type="KEGG" id="mmu:98752"/>
<dbReference type="UCSC" id="uc007dmq.2">
    <molecule id="Q920A9-1"/>
    <property type="organism name" value="mouse"/>
</dbReference>
<dbReference type="UCSC" id="uc007dmr.2">
    <molecule id="Q920A9-2"/>
    <property type="organism name" value="mouse"/>
</dbReference>
<dbReference type="AGR" id="MGI:2138647"/>
<dbReference type="CTD" id="84824"/>
<dbReference type="MGI" id="MGI:2138647">
    <property type="gene designation" value="Fcrla"/>
</dbReference>
<dbReference type="VEuPathDB" id="HostDB:ENSMUSG00000038421"/>
<dbReference type="eggNOG" id="ENOG502T149">
    <property type="taxonomic scope" value="Eukaryota"/>
</dbReference>
<dbReference type="GeneTree" id="ENSGT01050000244808"/>
<dbReference type="HOGENOM" id="CLU_063170_0_0_1"/>
<dbReference type="InParanoid" id="Q920A9"/>
<dbReference type="OMA" id="HHQMGIL"/>
<dbReference type="OrthoDB" id="64686at9989"/>
<dbReference type="PhylomeDB" id="Q920A9"/>
<dbReference type="TreeFam" id="TF335097"/>
<dbReference type="BioGRID-ORCS" id="98752">
    <property type="hits" value="1 hit in 77 CRISPR screens"/>
</dbReference>
<dbReference type="ChiTaRS" id="Fcrla">
    <property type="organism name" value="mouse"/>
</dbReference>
<dbReference type="PRO" id="PR:Q920A9"/>
<dbReference type="Proteomes" id="UP000000589">
    <property type="component" value="Chromosome 1"/>
</dbReference>
<dbReference type="RNAct" id="Q920A9">
    <property type="molecule type" value="protein"/>
</dbReference>
<dbReference type="Bgee" id="ENSMUSG00000038421">
    <property type="expression patterns" value="Expressed in spleen and 63 other cell types or tissues"/>
</dbReference>
<dbReference type="ExpressionAtlas" id="Q920A9">
    <property type="expression patterns" value="baseline and differential"/>
</dbReference>
<dbReference type="GO" id="GO:0005737">
    <property type="term" value="C:cytoplasm"/>
    <property type="evidence" value="ECO:0000266"/>
    <property type="project" value="MGI"/>
</dbReference>
<dbReference type="GO" id="GO:0030154">
    <property type="term" value="P:cell differentiation"/>
    <property type="evidence" value="ECO:0007669"/>
    <property type="project" value="UniProtKB-KW"/>
</dbReference>
<dbReference type="FunFam" id="2.60.40.10:FF:000651">
    <property type="entry name" value="Fc receptor like 1"/>
    <property type="match status" value="1"/>
</dbReference>
<dbReference type="FunFam" id="2.60.40.10:FF:000217">
    <property type="entry name" value="High affinity immunoglobulin gamma Fc receptor I"/>
    <property type="match status" value="1"/>
</dbReference>
<dbReference type="Gene3D" id="2.60.40.10">
    <property type="entry name" value="Immunoglobulins"/>
    <property type="match status" value="2"/>
</dbReference>
<dbReference type="InterPro" id="IPR007110">
    <property type="entry name" value="Ig-like_dom"/>
</dbReference>
<dbReference type="InterPro" id="IPR036179">
    <property type="entry name" value="Ig-like_dom_sf"/>
</dbReference>
<dbReference type="InterPro" id="IPR013783">
    <property type="entry name" value="Ig-like_fold"/>
</dbReference>
<dbReference type="InterPro" id="IPR050488">
    <property type="entry name" value="Ig_Fc_receptor"/>
</dbReference>
<dbReference type="InterPro" id="IPR003599">
    <property type="entry name" value="Ig_sub"/>
</dbReference>
<dbReference type="InterPro" id="IPR003598">
    <property type="entry name" value="Ig_sub2"/>
</dbReference>
<dbReference type="PANTHER" id="PTHR11481:SF71">
    <property type="entry name" value="FC RECEPTOR-LIKE A"/>
    <property type="match status" value="1"/>
</dbReference>
<dbReference type="PANTHER" id="PTHR11481">
    <property type="entry name" value="IMMUNOGLOBULIN FC RECEPTOR"/>
    <property type="match status" value="1"/>
</dbReference>
<dbReference type="Pfam" id="PF13895">
    <property type="entry name" value="Ig_2"/>
    <property type="match status" value="2"/>
</dbReference>
<dbReference type="SMART" id="SM00409">
    <property type="entry name" value="IG"/>
    <property type="match status" value="2"/>
</dbReference>
<dbReference type="SMART" id="SM00408">
    <property type="entry name" value="IGc2"/>
    <property type="match status" value="2"/>
</dbReference>
<dbReference type="SUPFAM" id="SSF48726">
    <property type="entry name" value="Immunoglobulin"/>
    <property type="match status" value="2"/>
</dbReference>
<dbReference type="PROSITE" id="PS50835">
    <property type="entry name" value="IG_LIKE"/>
    <property type="match status" value="2"/>
</dbReference>